<gene>
    <name type="primary">ybdL</name>
    <name type="ordered locus">b0600</name>
    <name type="ordered locus">JW0593</name>
</gene>
<sequence>MTNNPLIPQSKLPQLGTTIFTQMSALAQQHQAINLSQGFPDFDGPRYLQERLAHHVAQGANQYAPMTGVQALREAIAQKTERLYGYQPDADSDITVTAGATEALYAAITALVRNGDEVICFDPSYDSYAPAIALSGGIVKRMALQPPHFRVDWQEFAALLSERTRLVILNTPHNPSATVWQQADFAALWQAIAGHEIFVISDEVYEHINFSQQGHASVLAHPQLRERAVAVSSFGKTYHMTGWKVGYCVAPAPISAEIRKVHQYLTFSVNTPAQLALADMLRAEPEHYLALPDFYRQKRDILVNALNESRLEILPCEGTYFLLVDYSAVSTLDDVEFCQWLTQEHGVAAIPLSVFCADPFPHKLIRLCFAKKESTLLAAAERLRQL</sequence>
<keyword id="KW-0002">3D-structure</keyword>
<keyword id="KW-0032">Aminotransferase</keyword>
<keyword id="KW-0963">Cytoplasm</keyword>
<keyword id="KW-0663">Pyridoxal phosphate</keyword>
<keyword id="KW-1185">Reference proteome</keyword>
<keyword id="KW-0808">Transferase</keyword>
<name>YBDL_ECOLI</name>
<evidence type="ECO:0000250" key="1"/>
<evidence type="ECO:0000269" key="2">
    <source>
    </source>
</evidence>
<evidence type="ECO:0000305" key="3"/>
<evidence type="ECO:0007829" key="4">
    <source>
        <dbReference type="PDB" id="1U08"/>
    </source>
</evidence>
<protein>
    <recommendedName>
        <fullName>Methionine aminotransferase</fullName>
        <ecNumber>2.6.1.88</ecNumber>
    </recommendedName>
    <alternativeName>
        <fullName>Methionine-oxo-acid transaminase</fullName>
    </alternativeName>
</protein>
<organism>
    <name type="scientific">Escherichia coli (strain K12)</name>
    <dbReference type="NCBI Taxonomy" id="83333"/>
    <lineage>
        <taxon>Bacteria</taxon>
        <taxon>Pseudomonadati</taxon>
        <taxon>Pseudomonadota</taxon>
        <taxon>Gammaproteobacteria</taxon>
        <taxon>Enterobacterales</taxon>
        <taxon>Enterobacteriaceae</taxon>
        <taxon>Escherichia</taxon>
    </lineage>
</organism>
<proteinExistence type="evidence at protein level"/>
<accession>P77806</accession>
<dbReference type="EC" id="2.6.1.88"/>
<dbReference type="EMBL" id="U82598">
    <property type="protein sequence ID" value="AAB40801.1"/>
    <property type="molecule type" value="Genomic_DNA"/>
</dbReference>
<dbReference type="EMBL" id="U00096">
    <property type="protein sequence ID" value="AAC73701.1"/>
    <property type="molecule type" value="Genomic_DNA"/>
</dbReference>
<dbReference type="EMBL" id="AP009048">
    <property type="protein sequence ID" value="BAA35230.1"/>
    <property type="molecule type" value="Genomic_DNA"/>
</dbReference>
<dbReference type="PIR" id="F64793">
    <property type="entry name" value="F64793"/>
</dbReference>
<dbReference type="RefSeq" id="NP_415133.1">
    <property type="nucleotide sequence ID" value="NC_000913.3"/>
</dbReference>
<dbReference type="RefSeq" id="WP_000183907.1">
    <property type="nucleotide sequence ID" value="NZ_SSZK01000032.1"/>
</dbReference>
<dbReference type="PDB" id="1U08">
    <property type="method" value="X-ray"/>
    <property type="resolution" value="2.35 A"/>
    <property type="chains" value="A/B=1-386"/>
</dbReference>
<dbReference type="PDBsum" id="1U08"/>
<dbReference type="SMR" id="P77806"/>
<dbReference type="BioGRID" id="4260981">
    <property type="interactions" value="20"/>
</dbReference>
<dbReference type="BioGRID" id="849596">
    <property type="interactions" value="9"/>
</dbReference>
<dbReference type="DIP" id="DIP-11350N"/>
<dbReference type="FunCoup" id="P77806">
    <property type="interactions" value="726"/>
</dbReference>
<dbReference type="IntAct" id="P77806">
    <property type="interactions" value="14"/>
</dbReference>
<dbReference type="STRING" id="511145.b0600"/>
<dbReference type="PaxDb" id="511145-b0600"/>
<dbReference type="EnsemblBacteria" id="AAC73701">
    <property type="protein sequence ID" value="AAC73701"/>
    <property type="gene ID" value="b0600"/>
</dbReference>
<dbReference type="GeneID" id="945211"/>
<dbReference type="KEGG" id="ecj:JW0593"/>
<dbReference type="KEGG" id="eco:b0600"/>
<dbReference type="KEGG" id="ecoc:C3026_03000"/>
<dbReference type="PATRIC" id="fig|1411691.4.peg.1668"/>
<dbReference type="EchoBASE" id="EB3302"/>
<dbReference type="eggNOG" id="COG0436">
    <property type="taxonomic scope" value="Bacteria"/>
</dbReference>
<dbReference type="HOGENOM" id="CLU_017584_4_0_6"/>
<dbReference type="InParanoid" id="P77806"/>
<dbReference type="OMA" id="SQGANQY"/>
<dbReference type="OrthoDB" id="9763453at2"/>
<dbReference type="PhylomeDB" id="P77806"/>
<dbReference type="BioCyc" id="EcoCyc:G6329-MONOMER"/>
<dbReference type="BioCyc" id="MetaCyc:G6329-MONOMER"/>
<dbReference type="BRENDA" id="2.6.1.88">
    <property type="organism ID" value="2026"/>
</dbReference>
<dbReference type="EvolutionaryTrace" id="P77806"/>
<dbReference type="PRO" id="PR:P77806"/>
<dbReference type="Proteomes" id="UP000000625">
    <property type="component" value="Chromosome"/>
</dbReference>
<dbReference type="GO" id="GO:0005737">
    <property type="term" value="C:cytoplasm"/>
    <property type="evidence" value="ECO:0000318"/>
    <property type="project" value="GO_Central"/>
</dbReference>
<dbReference type="GO" id="GO:0016212">
    <property type="term" value="F:kynurenine-oxoglutarate transaminase activity"/>
    <property type="evidence" value="ECO:0000318"/>
    <property type="project" value="GO_Central"/>
</dbReference>
<dbReference type="GO" id="GO:0010326">
    <property type="term" value="F:methionine-oxo-acid transaminase activity"/>
    <property type="evidence" value="ECO:0000314"/>
    <property type="project" value="EcoCyc"/>
</dbReference>
<dbReference type="GO" id="GO:0042803">
    <property type="term" value="F:protein homodimerization activity"/>
    <property type="evidence" value="ECO:0000314"/>
    <property type="project" value="EcoCyc"/>
</dbReference>
<dbReference type="GO" id="GO:0030170">
    <property type="term" value="F:pyridoxal phosphate binding"/>
    <property type="evidence" value="ECO:0000314"/>
    <property type="project" value="EcoCyc"/>
</dbReference>
<dbReference type="GO" id="GO:0009058">
    <property type="term" value="P:biosynthetic process"/>
    <property type="evidence" value="ECO:0007669"/>
    <property type="project" value="InterPro"/>
</dbReference>
<dbReference type="CDD" id="cd00609">
    <property type="entry name" value="AAT_like"/>
    <property type="match status" value="1"/>
</dbReference>
<dbReference type="FunFam" id="3.40.640.10:FF:000033">
    <property type="entry name" value="Aspartate aminotransferase"/>
    <property type="match status" value="1"/>
</dbReference>
<dbReference type="Gene3D" id="3.90.1150.10">
    <property type="entry name" value="Aspartate Aminotransferase, domain 1"/>
    <property type="match status" value="1"/>
</dbReference>
<dbReference type="Gene3D" id="3.40.640.10">
    <property type="entry name" value="Type I PLP-dependent aspartate aminotransferase-like (Major domain)"/>
    <property type="match status" value="1"/>
</dbReference>
<dbReference type="InterPro" id="IPR004839">
    <property type="entry name" value="Aminotransferase_I/II_large"/>
</dbReference>
<dbReference type="InterPro" id="IPR051326">
    <property type="entry name" value="Kynurenine-oxoglutarate_AT"/>
</dbReference>
<dbReference type="InterPro" id="IPR015424">
    <property type="entry name" value="PyrdxlP-dep_Trfase"/>
</dbReference>
<dbReference type="InterPro" id="IPR015421">
    <property type="entry name" value="PyrdxlP-dep_Trfase_major"/>
</dbReference>
<dbReference type="InterPro" id="IPR015422">
    <property type="entry name" value="PyrdxlP-dep_Trfase_small"/>
</dbReference>
<dbReference type="NCBIfam" id="NF006569">
    <property type="entry name" value="PRK09082.1"/>
    <property type="match status" value="1"/>
</dbReference>
<dbReference type="NCBIfam" id="NF009079">
    <property type="entry name" value="PRK12414.1"/>
    <property type="match status" value="1"/>
</dbReference>
<dbReference type="PANTHER" id="PTHR43807">
    <property type="entry name" value="FI04487P"/>
    <property type="match status" value="1"/>
</dbReference>
<dbReference type="PANTHER" id="PTHR43807:SF20">
    <property type="entry name" value="FI04487P"/>
    <property type="match status" value="1"/>
</dbReference>
<dbReference type="Pfam" id="PF00155">
    <property type="entry name" value="Aminotran_1_2"/>
    <property type="match status" value="1"/>
</dbReference>
<dbReference type="SUPFAM" id="SSF53383">
    <property type="entry name" value="PLP-dependent transferases"/>
    <property type="match status" value="1"/>
</dbReference>
<comment type="function">
    <text evidence="2">Shows aminotransferase activity with methionine and histidine as substrates, and to a lesser extent also with phenylalanine.</text>
</comment>
<comment type="catalytic activity">
    <reaction evidence="2">
        <text>a 2-oxocarboxylate + L-methionine = 4-methylsulfanyl-2-oxobutanoate + an L-alpha-amino acid</text>
        <dbReference type="Rhea" id="RHEA:31763"/>
        <dbReference type="ChEBI" id="CHEBI:16723"/>
        <dbReference type="ChEBI" id="CHEBI:35179"/>
        <dbReference type="ChEBI" id="CHEBI:57844"/>
        <dbReference type="ChEBI" id="CHEBI:59869"/>
        <dbReference type="EC" id="2.6.1.88"/>
    </reaction>
</comment>
<comment type="cofactor">
    <cofactor>
        <name>pyridoxal 5'-phosphate</name>
        <dbReference type="ChEBI" id="CHEBI:597326"/>
    </cofactor>
</comment>
<comment type="subunit">
    <text evidence="2">Homodimer.</text>
</comment>
<comment type="interaction">
    <interactant intactId="EBI-543661">
        <id>P77806</id>
    </interactant>
    <interactant intactId="EBI-543592">
        <id>P69441</id>
        <label>adk</label>
    </interactant>
    <organismsDiffer>false</organismsDiffer>
    <experiments>3</experiments>
</comment>
<comment type="interaction">
    <interactant intactId="EBI-543661">
        <id>P77806</id>
    </interactant>
    <interactant intactId="EBI-2932021">
        <id>P0ABI8</id>
        <label>cyoB</label>
    </interactant>
    <organismsDiffer>false</organismsDiffer>
    <experiments>3</experiments>
</comment>
<comment type="interaction">
    <interactant intactId="EBI-543661">
        <id>P77806</id>
    </interactant>
    <interactant intactId="EBI-549111">
        <id>P10443</id>
        <label>dnaE</label>
    </interactant>
    <organismsDiffer>false</organismsDiffer>
    <experiments>3</experiments>
</comment>
<comment type="interaction">
    <interactant intactId="EBI-543661">
        <id>P77806</id>
    </interactant>
    <interactant intactId="EBI-1113234">
        <id>P68646</id>
        <label>fixX</label>
    </interactant>
    <organismsDiffer>false</organismsDiffer>
    <experiments>3</experiments>
</comment>
<comment type="subcellular location">
    <subcellularLocation>
        <location evidence="1">Cytoplasm</location>
    </subcellularLocation>
</comment>
<comment type="similarity">
    <text evidence="3">Belongs to the class-I pyridoxal-phosphate-dependent aminotransferase family.</text>
</comment>
<reference key="1">
    <citation type="journal article" date="1996" name="DNA Res.">
        <title>A 718-kb DNA sequence of the Escherichia coli K-12 genome corresponding to the 12.7-28.0 min region on the linkage map.</title>
        <authorList>
            <person name="Oshima T."/>
            <person name="Aiba H."/>
            <person name="Baba T."/>
            <person name="Fujita K."/>
            <person name="Hayashi K."/>
            <person name="Honjo A."/>
            <person name="Ikemoto K."/>
            <person name="Inada T."/>
            <person name="Itoh T."/>
            <person name="Kajihara M."/>
            <person name="Kanai K."/>
            <person name="Kashimoto K."/>
            <person name="Kimura S."/>
            <person name="Kitagawa M."/>
            <person name="Makino K."/>
            <person name="Masuda S."/>
            <person name="Miki T."/>
            <person name="Mizobuchi K."/>
            <person name="Mori H."/>
            <person name="Motomura K."/>
            <person name="Nakamura Y."/>
            <person name="Nashimoto H."/>
            <person name="Nishio Y."/>
            <person name="Saito N."/>
            <person name="Sampei G."/>
            <person name="Seki Y."/>
            <person name="Tagami H."/>
            <person name="Takemoto K."/>
            <person name="Wada C."/>
            <person name="Yamamoto Y."/>
            <person name="Yano M."/>
            <person name="Horiuchi T."/>
        </authorList>
    </citation>
    <scope>NUCLEOTIDE SEQUENCE [LARGE SCALE GENOMIC DNA]</scope>
    <source>
        <strain>K12 / W3110 / ATCC 27325 / DSM 5911</strain>
    </source>
</reference>
<reference key="2">
    <citation type="submission" date="1997-01" db="EMBL/GenBank/DDBJ databases">
        <title>Sequence of minutes 4-25 of Escherichia coli.</title>
        <authorList>
            <person name="Chung E."/>
            <person name="Allen E."/>
            <person name="Araujo R."/>
            <person name="Aparicio A.M."/>
            <person name="Davis K."/>
            <person name="Duncan M."/>
            <person name="Federspiel N."/>
            <person name="Hyman R."/>
            <person name="Kalman S."/>
            <person name="Komp C."/>
            <person name="Kurdi O."/>
            <person name="Lew H."/>
            <person name="Lin D."/>
            <person name="Namath A."/>
            <person name="Oefner P."/>
            <person name="Roberts D."/>
            <person name="Schramm S."/>
            <person name="Davis R.W."/>
        </authorList>
    </citation>
    <scope>NUCLEOTIDE SEQUENCE [LARGE SCALE GENOMIC DNA]</scope>
    <source>
        <strain>K12 / MG1655 / ATCC 47076</strain>
    </source>
</reference>
<reference key="3">
    <citation type="journal article" date="1997" name="Science">
        <title>The complete genome sequence of Escherichia coli K-12.</title>
        <authorList>
            <person name="Blattner F.R."/>
            <person name="Plunkett G. III"/>
            <person name="Bloch C.A."/>
            <person name="Perna N.T."/>
            <person name="Burland V."/>
            <person name="Riley M."/>
            <person name="Collado-Vides J."/>
            <person name="Glasner J.D."/>
            <person name="Rode C.K."/>
            <person name="Mayhew G.F."/>
            <person name="Gregor J."/>
            <person name="Davis N.W."/>
            <person name="Kirkpatrick H.A."/>
            <person name="Goeden M.A."/>
            <person name="Rose D.J."/>
            <person name="Mau B."/>
            <person name="Shao Y."/>
        </authorList>
    </citation>
    <scope>NUCLEOTIDE SEQUENCE [LARGE SCALE GENOMIC DNA]</scope>
    <source>
        <strain>K12 / MG1655 / ATCC 47076</strain>
    </source>
</reference>
<reference key="4">
    <citation type="journal article" date="2006" name="Mol. Syst. Biol.">
        <title>Highly accurate genome sequences of Escherichia coli K-12 strains MG1655 and W3110.</title>
        <authorList>
            <person name="Hayashi K."/>
            <person name="Morooka N."/>
            <person name="Yamamoto Y."/>
            <person name="Fujita K."/>
            <person name="Isono K."/>
            <person name="Choi S."/>
            <person name="Ohtsubo E."/>
            <person name="Baba T."/>
            <person name="Wanner B.L."/>
            <person name="Mori H."/>
            <person name="Horiuchi T."/>
        </authorList>
    </citation>
    <scope>NUCLEOTIDE SEQUENCE [LARGE SCALE GENOMIC DNA]</scope>
    <source>
        <strain>K12 / W3110 / ATCC 27325 / DSM 5911</strain>
    </source>
</reference>
<reference key="5">
    <citation type="journal article" date="2004" name="FEBS Lett.">
        <title>Crystal structure and reactivity of YbdL from Escherichia coli identify a methionine aminotransferase function.</title>
        <authorList>
            <person name="Dolzan M."/>
            <person name="Johansson K."/>
            <person name="Roig-Zamboni V."/>
            <person name="Campanacci V."/>
            <person name="Tegoni M."/>
            <person name="Schneider G."/>
            <person name="Cambillau C."/>
        </authorList>
    </citation>
    <scope>X-RAY CRYSTALLOGRAPHY (2.35 ANGSTROMS) IN COMPLEX WITH PYRIDOXAL PHOSPHATE</scope>
    <scope>FUNCTION</scope>
    <scope>CATALYTIC ACTIVITY</scope>
    <scope>SUBUNIT</scope>
    <scope>PYRIDOXAL PHOSPHATE AT LYS-236</scope>
</reference>
<feature type="chain" id="PRO_0000123925" description="Methionine aminotransferase">
    <location>
        <begin position="1"/>
        <end position="386"/>
    </location>
</feature>
<feature type="modified residue" description="N6-(pyridoxal phosphate)lysine">
    <location>
        <position position="236"/>
    </location>
</feature>
<feature type="helix" evidence="4">
    <location>
        <begin position="19"/>
        <end position="29"/>
    </location>
</feature>
<feature type="helix" evidence="4">
    <location>
        <begin position="46"/>
        <end position="57"/>
    </location>
</feature>
<feature type="helix" evidence="4">
    <location>
        <begin position="70"/>
        <end position="84"/>
    </location>
</feature>
<feature type="turn" evidence="4">
    <location>
        <begin position="90"/>
        <end position="93"/>
    </location>
</feature>
<feature type="strand" evidence="4">
    <location>
        <begin position="94"/>
        <end position="99"/>
    </location>
</feature>
<feature type="helix" evidence="4">
    <location>
        <begin position="100"/>
        <end position="111"/>
    </location>
</feature>
<feature type="strand" evidence="4">
    <location>
        <begin position="117"/>
        <end position="123"/>
    </location>
</feature>
<feature type="helix" evidence="4">
    <location>
        <begin position="128"/>
        <end position="134"/>
    </location>
</feature>
<feature type="strand" evidence="4">
    <location>
        <begin position="138"/>
        <end position="143"/>
    </location>
</feature>
<feature type="turn" evidence="4">
    <location>
        <begin position="146"/>
        <end position="148"/>
    </location>
</feature>
<feature type="helix" evidence="4">
    <location>
        <begin position="153"/>
        <end position="159"/>
    </location>
</feature>
<feature type="strand" evidence="4">
    <location>
        <begin position="164"/>
        <end position="172"/>
    </location>
</feature>
<feature type="turn" evidence="4">
    <location>
        <begin position="174"/>
        <end position="176"/>
    </location>
</feature>
<feature type="helix" evidence="4">
    <location>
        <begin position="182"/>
        <end position="192"/>
    </location>
</feature>
<feature type="strand" evidence="4">
    <location>
        <begin position="198"/>
        <end position="202"/>
    </location>
</feature>
<feature type="turn" evidence="4">
    <location>
        <begin position="204"/>
        <end position="207"/>
    </location>
</feature>
<feature type="helix" evidence="4">
    <location>
        <begin position="218"/>
        <end position="220"/>
    </location>
</feature>
<feature type="helix" evidence="4">
    <location>
        <begin position="222"/>
        <end position="225"/>
    </location>
</feature>
<feature type="strand" evidence="4">
    <location>
        <begin position="228"/>
        <end position="233"/>
    </location>
</feature>
<feature type="helix" evidence="4">
    <location>
        <begin position="234"/>
        <end position="237"/>
    </location>
</feature>
<feature type="helix" evidence="4">
    <location>
        <begin position="241"/>
        <end position="243"/>
    </location>
</feature>
<feature type="strand" evidence="4">
    <location>
        <begin position="246"/>
        <end position="249"/>
    </location>
</feature>
<feature type="helix" evidence="4">
    <location>
        <begin position="252"/>
        <end position="265"/>
    </location>
</feature>
<feature type="helix" evidence="4">
    <location>
        <begin position="271"/>
        <end position="283"/>
    </location>
</feature>
<feature type="helix" evidence="4">
    <location>
        <begin position="286"/>
        <end position="289"/>
    </location>
</feature>
<feature type="helix" evidence="4">
    <location>
        <begin position="291"/>
        <end position="305"/>
    </location>
</feature>
<feature type="strand" evidence="4">
    <location>
        <begin position="308"/>
        <end position="310"/>
    </location>
</feature>
<feature type="strand" evidence="4">
    <location>
        <begin position="318"/>
        <end position="325"/>
    </location>
</feature>
<feature type="turn" evidence="4">
    <location>
        <begin position="327"/>
        <end position="329"/>
    </location>
</feature>
<feature type="helix" evidence="4">
    <location>
        <begin position="334"/>
        <end position="344"/>
    </location>
</feature>
<feature type="helix" evidence="4">
    <location>
        <begin position="352"/>
        <end position="355"/>
    </location>
</feature>
<feature type="strand" evidence="4">
    <location>
        <begin position="364"/>
        <end position="368"/>
    </location>
</feature>
<feature type="helix" evidence="4">
    <location>
        <begin position="373"/>
        <end position="383"/>
    </location>
</feature>